<organism>
    <name type="scientific">Xylella fastidiosa (strain M12)</name>
    <dbReference type="NCBI Taxonomy" id="405440"/>
    <lineage>
        <taxon>Bacteria</taxon>
        <taxon>Pseudomonadati</taxon>
        <taxon>Pseudomonadota</taxon>
        <taxon>Gammaproteobacteria</taxon>
        <taxon>Lysobacterales</taxon>
        <taxon>Lysobacteraceae</taxon>
        <taxon>Xylella</taxon>
    </lineage>
</organism>
<accession>B0U3F5</accession>
<reference key="1">
    <citation type="journal article" date="2010" name="J. Bacteriol.">
        <title>Whole genome sequences of two Xylella fastidiosa strains (M12 and M23) causing almond leaf scorch disease in California.</title>
        <authorList>
            <person name="Chen J."/>
            <person name="Xie G."/>
            <person name="Han S."/>
            <person name="Chertkov O."/>
            <person name="Sims D."/>
            <person name="Civerolo E.L."/>
        </authorList>
    </citation>
    <scope>NUCLEOTIDE SEQUENCE [LARGE SCALE GENOMIC DNA]</scope>
    <source>
        <strain>M12</strain>
    </source>
</reference>
<feature type="chain" id="PRO_1000097853" description="5-methyltetrahydropteroyltriglutamate--homocysteine methyltransferase">
    <location>
        <begin position="1"/>
        <end position="758"/>
    </location>
</feature>
<feature type="active site" description="Proton donor" evidence="1">
    <location>
        <position position="699"/>
    </location>
</feature>
<feature type="binding site" evidence="1">
    <location>
        <begin position="16"/>
        <end position="19"/>
    </location>
    <ligand>
        <name>5-methyltetrahydropteroyltri-L-glutamate</name>
        <dbReference type="ChEBI" id="CHEBI:58207"/>
    </ligand>
</feature>
<feature type="binding site" evidence="1">
    <location>
        <position position="116"/>
    </location>
    <ligand>
        <name>5-methyltetrahydropteroyltri-L-glutamate</name>
        <dbReference type="ChEBI" id="CHEBI:58207"/>
    </ligand>
</feature>
<feature type="binding site" evidence="1">
    <location>
        <begin position="436"/>
        <end position="438"/>
    </location>
    <ligand>
        <name>L-homocysteine</name>
        <dbReference type="ChEBI" id="CHEBI:58199"/>
    </ligand>
</feature>
<feature type="binding site" evidence="1">
    <location>
        <begin position="436"/>
        <end position="438"/>
    </location>
    <ligand>
        <name>L-methionine</name>
        <dbReference type="ChEBI" id="CHEBI:57844"/>
    </ligand>
</feature>
<feature type="binding site" evidence="1">
    <location>
        <position position="489"/>
    </location>
    <ligand>
        <name>L-homocysteine</name>
        <dbReference type="ChEBI" id="CHEBI:58199"/>
    </ligand>
</feature>
<feature type="binding site" evidence="1">
    <location>
        <position position="489"/>
    </location>
    <ligand>
        <name>L-methionine</name>
        <dbReference type="ChEBI" id="CHEBI:57844"/>
    </ligand>
</feature>
<feature type="binding site" evidence="1">
    <location>
        <begin position="520"/>
        <end position="521"/>
    </location>
    <ligand>
        <name>5-methyltetrahydropteroyltri-L-glutamate</name>
        <dbReference type="ChEBI" id="CHEBI:58207"/>
    </ligand>
</feature>
<feature type="binding site" evidence="1">
    <location>
        <position position="566"/>
    </location>
    <ligand>
        <name>5-methyltetrahydropteroyltri-L-glutamate</name>
        <dbReference type="ChEBI" id="CHEBI:58207"/>
    </ligand>
</feature>
<feature type="binding site" evidence="1">
    <location>
        <position position="604"/>
    </location>
    <ligand>
        <name>L-homocysteine</name>
        <dbReference type="ChEBI" id="CHEBI:58199"/>
    </ligand>
</feature>
<feature type="binding site" evidence="1">
    <location>
        <position position="604"/>
    </location>
    <ligand>
        <name>L-methionine</name>
        <dbReference type="ChEBI" id="CHEBI:57844"/>
    </ligand>
</feature>
<feature type="binding site" evidence="1">
    <location>
        <position position="610"/>
    </location>
    <ligand>
        <name>5-methyltetrahydropteroyltri-L-glutamate</name>
        <dbReference type="ChEBI" id="CHEBI:58207"/>
    </ligand>
</feature>
<feature type="binding site" evidence="1">
    <location>
        <position position="646"/>
    </location>
    <ligand>
        <name>Zn(2+)</name>
        <dbReference type="ChEBI" id="CHEBI:29105"/>
        <note>catalytic</note>
    </ligand>
</feature>
<feature type="binding site" evidence="1">
    <location>
        <position position="648"/>
    </location>
    <ligand>
        <name>Zn(2+)</name>
        <dbReference type="ChEBI" id="CHEBI:29105"/>
        <note>catalytic</note>
    </ligand>
</feature>
<feature type="binding site" evidence="1">
    <location>
        <position position="670"/>
    </location>
    <ligand>
        <name>Zn(2+)</name>
        <dbReference type="ChEBI" id="CHEBI:29105"/>
        <note>catalytic</note>
    </ligand>
</feature>
<feature type="binding site" evidence="1">
    <location>
        <position position="731"/>
    </location>
    <ligand>
        <name>Zn(2+)</name>
        <dbReference type="ChEBI" id="CHEBI:29105"/>
        <note>catalytic</note>
    </ligand>
</feature>
<name>METE_XYLFM</name>
<gene>
    <name evidence="1" type="primary">metE</name>
    <name type="ordered locus">Xfasm12_1465</name>
</gene>
<comment type="function">
    <text evidence="1">Catalyzes the transfer of a methyl group from 5-methyltetrahydrofolate to homocysteine resulting in methionine formation.</text>
</comment>
<comment type="catalytic activity">
    <reaction evidence="1">
        <text>5-methyltetrahydropteroyltri-L-glutamate + L-homocysteine = tetrahydropteroyltri-L-glutamate + L-methionine</text>
        <dbReference type="Rhea" id="RHEA:21196"/>
        <dbReference type="ChEBI" id="CHEBI:57844"/>
        <dbReference type="ChEBI" id="CHEBI:58140"/>
        <dbReference type="ChEBI" id="CHEBI:58199"/>
        <dbReference type="ChEBI" id="CHEBI:58207"/>
        <dbReference type="EC" id="2.1.1.14"/>
    </reaction>
</comment>
<comment type="cofactor">
    <cofactor evidence="1">
        <name>Zn(2+)</name>
        <dbReference type="ChEBI" id="CHEBI:29105"/>
    </cofactor>
    <text evidence="1">Binds 1 zinc ion per subunit.</text>
</comment>
<comment type="pathway">
    <text evidence="1">Amino-acid biosynthesis; L-methionine biosynthesis via de novo pathway; L-methionine from L-homocysteine (MetE route): step 1/1.</text>
</comment>
<comment type="similarity">
    <text evidence="1">Belongs to the vitamin-B12 independent methionine synthase family.</text>
</comment>
<proteinExistence type="inferred from homology"/>
<sequence>MTIVTNLGFPRIGARRELKRALESHWRGETDATQLQHTARELRARHWRLQRDAGVDLPPSNDFSLYDHVLDTAFLFDAIPQRYHGLVDADPLAGYFAMARGRQADNIDLHALEMTKWFDTNYHYLVPELHRDQHFALRGNKPIAEFEEALALGITTRPVLLGPVSFLLLSKTVDGSNRLDLLERLLPVYTQLLRQLQESGAEWVQIDEPTLVLDLDAQTQQAFRKAYATLNQGPRPKLLLTSYFGPLGDNLELALQLPADGLHIDLVRGTEQLDAVLNTLPAGRVLSAGLVNGRNIWRTALDNALTLARYAQGRVDKDHLWLAPSCSLLHVPVDLEQEKNLDADVRNWLAFAKQKLSELRVLADALDNKPEAETALTQTRQALEARRQSPKVHRPDVAQRLAALTPDTTRRNTAYPQRSQAQQHTLNLPAYPTTTIGSFPQTLEVREARAQFKSGKLSESDYEAFLKAETERCVRTQEEIGLDVLVHGEFERNDMVEYFGEQLDGFIFTKLGWVQSYGSRCVKPPIIYGDVVRPAPMTVTWSAYAQSLTDKPMKGMLTGPVTMLQWSFVRDDQERAQTCRQIALALRDEVQDLEKAGIKVIQIDEPAIREGLPLRRGEWADYLNWAVESFRIASSNVHDTTQIHTHMCYSEFNDIIEAVAALDADVISIETSRSRMELLDAFVKFRYPNAIGPGVYDIHSPRVPQEEEMVLLLKKARAVLPPEQLWVNPDCGLKTRGWKETRAALQTMVHAAQRLRAE</sequence>
<evidence type="ECO:0000255" key="1">
    <source>
        <dbReference type="HAMAP-Rule" id="MF_00172"/>
    </source>
</evidence>
<dbReference type="EC" id="2.1.1.14" evidence="1"/>
<dbReference type="EMBL" id="CP000941">
    <property type="protein sequence ID" value="ACA12384.1"/>
    <property type="molecule type" value="Genomic_DNA"/>
</dbReference>
<dbReference type="RefSeq" id="WP_012337958.1">
    <property type="nucleotide sequence ID" value="NC_010513.1"/>
</dbReference>
<dbReference type="SMR" id="B0U3F5"/>
<dbReference type="KEGG" id="xfm:Xfasm12_1465"/>
<dbReference type="HOGENOM" id="CLU_013175_0_0_6"/>
<dbReference type="UniPathway" id="UPA00051">
    <property type="reaction ID" value="UER00082"/>
</dbReference>
<dbReference type="GO" id="GO:0003871">
    <property type="term" value="F:5-methyltetrahydropteroyltriglutamate-homocysteine S-methyltransferase activity"/>
    <property type="evidence" value="ECO:0007669"/>
    <property type="project" value="UniProtKB-UniRule"/>
</dbReference>
<dbReference type="GO" id="GO:0008270">
    <property type="term" value="F:zinc ion binding"/>
    <property type="evidence" value="ECO:0007669"/>
    <property type="project" value="InterPro"/>
</dbReference>
<dbReference type="GO" id="GO:0009086">
    <property type="term" value="P:methionine biosynthetic process"/>
    <property type="evidence" value="ECO:0007669"/>
    <property type="project" value="UniProtKB-UniRule"/>
</dbReference>
<dbReference type="GO" id="GO:0032259">
    <property type="term" value="P:methylation"/>
    <property type="evidence" value="ECO:0007669"/>
    <property type="project" value="UniProtKB-KW"/>
</dbReference>
<dbReference type="CDD" id="cd03311">
    <property type="entry name" value="CIMS_C_terminal_like"/>
    <property type="match status" value="1"/>
</dbReference>
<dbReference type="CDD" id="cd03312">
    <property type="entry name" value="CIMS_N_terminal_like"/>
    <property type="match status" value="1"/>
</dbReference>
<dbReference type="FunFam" id="3.20.20.210:FF:000002">
    <property type="entry name" value="5-methyltetrahydropteroyltriglutamate--homocysteine methyltransferase"/>
    <property type="match status" value="1"/>
</dbReference>
<dbReference type="FunFam" id="3.20.20.210:FF:000003">
    <property type="entry name" value="5-methyltetrahydropteroyltriglutamate--homocysteine methyltransferase"/>
    <property type="match status" value="1"/>
</dbReference>
<dbReference type="Gene3D" id="3.20.20.210">
    <property type="match status" value="2"/>
</dbReference>
<dbReference type="HAMAP" id="MF_00172">
    <property type="entry name" value="Meth_synth"/>
    <property type="match status" value="1"/>
</dbReference>
<dbReference type="InterPro" id="IPR013215">
    <property type="entry name" value="Cbl-indep_Met_Synth_N"/>
</dbReference>
<dbReference type="InterPro" id="IPR006276">
    <property type="entry name" value="Cobalamin-indep_Met_synthase"/>
</dbReference>
<dbReference type="InterPro" id="IPR002629">
    <property type="entry name" value="Met_Synth_C/arc"/>
</dbReference>
<dbReference type="InterPro" id="IPR038071">
    <property type="entry name" value="UROD/MetE-like_sf"/>
</dbReference>
<dbReference type="NCBIfam" id="TIGR01371">
    <property type="entry name" value="met_syn_B12ind"/>
    <property type="match status" value="1"/>
</dbReference>
<dbReference type="NCBIfam" id="NF003556">
    <property type="entry name" value="PRK05222.1"/>
    <property type="match status" value="1"/>
</dbReference>
<dbReference type="PANTHER" id="PTHR30519">
    <property type="entry name" value="5-METHYLTETRAHYDROPTEROYLTRIGLUTAMATE--HOMOCYSTEINE METHYLTRANSFERASE"/>
    <property type="match status" value="1"/>
</dbReference>
<dbReference type="Pfam" id="PF08267">
    <property type="entry name" value="Meth_synt_1"/>
    <property type="match status" value="1"/>
</dbReference>
<dbReference type="Pfam" id="PF01717">
    <property type="entry name" value="Meth_synt_2"/>
    <property type="match status" value="1"/>
</dbReference>
<dbReference type="PIRSF" id="PIRSF000382">
    <property type="entry name" value="MeTrfase_B12_ind"/>
    <property type="match status" value="1"/>
</dbReference>
<dbReference type="SUPFAM" id="SSF51726">
    <property type="entry name" value="UROD/MetE-like"/>
    <property type="match status" value="2"/>
</dbReference>
<protein>
    <recommendedName>
        <fullName evidence="1">5-methyltetrahydropteroyltriglutamate--homocysteine methyltransferase</fullName>
        <ecNumber evidence="1">2.1.1.14</ecNumber>
    </recommendedName>
    <alternativeName>
        <fullName evidence="1">Cobalamin-independent methionine synthase</fullName>
    </alternativeName>
    <alternativeName>
        <fullName evidence="1">Methionine synthase, vitamin-B12 independent isozyme</fullName>
    </alternativeName>
</protein>
<keyword id="KW-0028">Amino-acid biosynthesis</keyword>
<keyword id="KW-0479">Metal-binding</keyword>
<keyword id="KW-0486">Methionine biosynthesis</keyword>
<keyword id="KW-0489">Methyltransferase</keyword>
<keyword id="KW-0677">Repeat</keyword>
<keyword id="KW-0808">Transferase</keyword>
<keyword id="KW-0862">Zinc</keyword>